<dbReference type="EC" id="2.6.1.9"/>
<dbReference type="EMBL" id="U92974">
    <property type="protein sequence ID" value="AAB81901.1"/>
    <property type="molecule type" value="Genomic_DNA"/>
</dbReference>
<dbReference type="EMBL" id="AE005176">
    <property type="protein sequence ID" value="AAK05304.1"/>
    <property type="molecule type" value="Genomic_DNA"/>
</dbReference>
<dbReference type="PIR" id="B45734">
    <property type="entry name" value="B45734"/>
</dbReference>
<dbReference type="PIR" id="F86775">
    <property type="entry name" value="F86775"/>
</dbReference>
<dbReference type="RefSeq" id="NP_267362.1">
    <property type="nucleotide sequence ID" value="NC_002662.1"/>
</dbReference>
<dbReference type="RefSeq" id="WP_010905826.1">
    <property type="nucleotide sequence ID" value="NC_002662.1"/>
</dbReference>
<dbReference type="SMR" id="Q02135"/>
<dbReference type="PaxDb" id="272623-L0065"/>
<dbReference type="EnsemblBacteria" id="AAK05304">
    <property type="protein sequence ID" value="AAK05304"/>
    <property type="gene ID" value="L0065"/>
</dbReference>
<dbReference type="KEGG" id="lla:L0065"/>
<dbReference type="PATRIC" id="fig|272623.7.peg.1301"/>
<dbReference type="eggNOG" id="COG0079">
    <property type="taxonomic scope" value="Bacteria"/>
</dbReference>
<dbReference type="HOGENOM" id="CLU_017584_3_0_9"/>
<dbReference type="OrthoDB" id="9813612at2"/>
<dbReference type="UniPathway" id="UPA00031">
    <property type="reaction ID" value="UER00012"/>
</dbReference>
<dbReference type="Proteomes" id="UP000002196">
    <property type="component" value="Chromosome"/>
</dbReference>
<dbReference type="GO" id="GO:0004400">
    <property type="term" value="F:histidinol-phosphate transaminase activity"/>
    <property type="evidence" value="ECO:0007669"/>
    <property type="project" value="UniProtKB-UniRule"/>
</dbReference>
<dbReference type="GO" id="GO:0030170">
    <property type="term" value="F:pyridoxal phosphate binding"/>
    <property type="evidence" value="ECO:0007669"/>
    <property type="project" value="InterPro"/>
</dbReference>
<dbReference type="GO" id="GO:0000105">
    <property type="term" value="P:L-histidine biosynthetic process"/>
    <property type="evidence" value="ECO:0007669"/>
    <property type="project" value="UniProtKB-UniRule"/>
</dbReference>
<dbReference type="CDD" id="cd00609">
    <property type="entry name" value="AAT_like"/>
    <property type="match status" value="1"/>
</dbReference>
<dbReference type="Gene3D" id="3.90.1150.10">
    <property type="entry name" value="Aspartate Aminotransferase, domain 1"/>
    <property type="match status" value="1"/>
</dbReference>
<dbReference type="Gene3D" id="3.40.640.10">
    <property type="entry name" value="Type I PLP-dependent aspartate aminotransferase-like (Major domain)"/>
    <property type="match status" value="1"/>
</dbReference>
<dbReference type="HAMAP" id="MF_01023">
    <property type="entry name" value="HisC_aminotrans_2"/>
    <property type="match status" value="1"/>
</dbReference>
<dbReference type="InterPro" id="IPR001917">
    <property type="entry name" value="Aminotrans_II_pyridoxalP_BS"/>
</dbReference>
<dbReference type="InterPro" id="IPR004839">
    <property type="entry name" value="Aminotransferase_I/II_large"/>
</dbReference>
<dbReference type="InterPro" id="IPR005861">
    <property type="entry name" value="HisP_aminotrans"/>
</dbReference>
<dbReference type="InterPro" id="IPR050106">
    <property type="entry name" value="HistidinolP_aminotransfase"/>
</dbReference>
<dbReference type="InterPro" id="IPR015424">
    <property type="entry name" value="PyrdxlP-dep_Trfase"/>
</dbReference>
<dbReference type="InterPro" id="IPR015421">
    <property type="entry name" value="PyrdxlP-dep_Trfase_major"/>
</dbReference>
<dbReference type="InterPro" id="IPR015422">
    <property type="entry name" value="PyrdxlP-dep_Trfase_small"/>
</dbReference>
<dbReference type="NCBIfam" id="TIGR01141">
    <property type="entry name" value="hisC"/>
    <property type="match status" value="1"/>
</dbReference>
<dbReference type="PANTHER" id="PTHR43643:SF3">
    <property type="entry name" value="HISTIDINOL-PHOSPHATE AMINOTRANSFERASE"/>
    <property type="match status" value="1"/>
</dbReference>
<dbReference type="PANTHER" id="PTHR43643">
    <property type="entry name" value="HISTIDINOL-PHOSPHATE AMINOTRANSFERASE 2"/>
    <property type="match status" value="1"/>
</dbReference>
<dbReference type="Pfam" id="PF00155">
    <property type="entry name" value="Aminotran_1_2"/>
    <property type="match status" value="1"/>
</dbReference>
<dbReference type="SUPFAM" id="SSF53383">
    <property type="entry name" value="PLP-dependent transferases"/>
    <property type="match status" value="1"/>
</dbReference>
<dbReference type="PROSITE" id="PS00599">
    <property type="entry name" value="AA_TRANSFER_CLASS_2"/>
    <property type="match status" value="1"/>
</dbReference>
<evidence type="ECO:0000250" key="1"/>
<evidence type="ECO:0000305" key="2"/>
<sequence>MSWQNNLRSVSPYIAGEQPELTDIIKLNTNENPYPPTSVAQLFNERYKTKNLRLYPSTDAKSLRKKLADYHHLEVEQVIIGNGSDEVLSLSFLTFFNSQSPLLMPDITYSFYPIYCELYRIPFQKVPVDDDFKVLIKDYCIENGGIVIANPDAPTALALNLKDIEEILKKNQNSIVLINEAYIDFGGETCLPLLKKYDNLVVVQTFSKSRSLAGIRLGVAYGSAEAISHLYDVKNSFNSYPIDSLAQIIGEASLMDEHYFQKNIQKIIKTREVFKDNLVNLGFEVTDSKANFVFVHHPKVKAEELFKALYEAKIIVRHWNQPRIDDWLRITIGTNKEMNKVIEFLKGYLKKNEEIDEWKK</sequence>
<gene>
    <name type="primary">hisC</name>
    <name type="ordered locus">LL1206</name>
    <name type="ORF">L0065</name>
</gene>
<feature type="chain" id="PRO_0000153376" description="Histidinol-phosphate aminotransferase">
    <location>
        <begin position="1"/>
        <end position="360"/>
    </location>
</feature>
<feature type="modified residue" description="N6-(pyridoxal phosphate)lysine" evidence="1">
    <location>
        <position position="208"/>
    </location>
</feature>
<feature type="sequence conflict" description="In Ref. 2; AAB81901." evidence="2" ref="2">
    <original>I</original>
    <variation>M</variation>
    <location>
        <position position="24"/>
    </location>
</feature>
<feature type="sequence conflict" description="In Ref. 2; AAB81901." evidence="2" ref="2">
    <original>D</original>
    <variation>E</variation>
    <location>
        <position position="69"/>
    </location>
</feature>
<feature type="sequence conflict" description="In Ref. 2; AAB81901." evidence="2" ref="2">
    <original>I</original>
    <variation>F</variation>
    <location>
        <position position="79"/>
    </location>
</feature>
<feature type="sequence conflict" description="In Ref. 2; AAB81901." evidence="2" ref="2">
    <original>L</original>
    <variation>S</variation>
    <location>
        <position position="135"/>
    </location>
</feature>
<feature type="sequence conflict" description="In Ref. 2; AAB81901." evidence="2" ref="2">
    <original>D</original>
    <variation>N</variation>
    <location>
        <position position="152"/>
    </location>
</feature>
<feature type="sequence conflict" description="In Ref. 2; AAB81901." evidence="2" ref="2">
    <original>N</original>
    <variation>D</variation>
    <location>
        <position position="179"/>
    </location>
</feature>
<feature type="sequence conflict" description="In Ref. 2; AAB81901." evidence="2" ref="2">
    <original>E</original>
    <variation>D</variation>
    <location>
        <position position="304"/>
    </location>
</feature>
<organism>
    <name type="scientific">Lactococcus lactis subsp. lactis (strain IL1403)</name>
    <name type="common">Streptococcus lactis</name>
    <dbReference type="NCBI Taxonomy" id="272623"/>
    <lineage>
        <taxon>Bacteria</taxon>
        <taxon>Bacillati</taxon>
        <taxon>Bacillota</taxon>
        <taxon>Bacilli</taxon>
        <taxon>Lactobacillales</taxon>
        <taxon>Streptococcaceae</taxon>
        <taxon>Lactococcus</taxon>
    </lineage>
</organism>
<proteinExistence type="inferred from homology"/>
<accession>Q02135</accession>
<accession>O34130</accession>
<name>HIS8_LACLA</name>
<keyword id="KW-0028">Amino-acid biosynthesis</keyword>
<keyword id="KW-0032">Aminotransferase</keyword>
<keyword id="KW-0368">Histidine biosynthesis</keyword>
<keyword id="KW-0663">Pyridoxal phosphate</keyword>
<keyword id="KW-1185">Reference proteome</keyword>
<keyword id="KW-0808">Transferase</keyword>
<reference key="1">
    <citation type="journal article" date="1992" name="J. Bacteriol.">
        <title>Histidine biosynthesis genes in Lactococcus lactis subsp. lactis.</title>
        <authorList>
            <person name="Delorme C."/>
            <person name="Ehrlich S.D."/>
            <person name="Renault P."/>
        </authorList>
    </citation>
    <scope>NUCLEOTIDE SEQUENCE [GENOMIC DNA]</scope>
    <source>
        <strain>NCDO 2118</strain>
    </source>
</reference>
<reference key="2">
    <citation type="submission" date="1997-11" db="EMBL/GenBank/DDBJ databases">
        <authorList>
            <person name="Delorme C."/>
            <person name="Goupil-Feuillerat N."/>
            <person name="Godon J.-J."/>
            <person name="Ehrlich S.D."/>
            <person name="Renault P."/>
        </authorList>
    </citation>
    <scope>SEQUENCE REVISION</scope>
</reference>
<reference key="3">
    <citation type="journal article" date="2001" name="Genome Res.">
        <title>The complete genome sequence of the lactic acid bacterium Lactococcus lactis ssp. lactis IL1403.</title>
        <authorList>
            <person name="Bolotin A."/>
            <person name="Wincker P."/>
            <person name="Mauger S."/>
            <person name="Jaillon O."/>
            <person name="Malarme K."/>
            <person name="Weissenbach J."/>
            <person name="Ehrlich S.D."/>
            <person name="Sorokin A."/>
        </authorList>
    </citation>
    <scope>NUCLEOTIDE SEQUENCE [LARGE SCALE GENOMIC DNA]</scope>
    <source>
        <strain>IL1403</strain>
    </source>
</reference>
<protein>
    <recommendedName>
        <fullName>Histidinol-phosphate aminotransferase</fullName>
        <ecNumber>2.6.1.9</ecNumber>
    </recommendedName>
    <alternativeName>
        <fullName>Imidazole acetol-phosphate transaminase</fullName>
    </alternativeName>
</protein>
<comment type="catalytic activity">
    <reaction>
        <text>L-histidinol phosphate + 2-oxoglutarate = 3-(imidazol-4-yl)-2-oxopropyl phosphate + L-glutamate</text>
        <dbReference type="Rhea" id="RHEA:23744"/>
        <dbReference type="ChEBI" id="CHEBI:16810"/>
        <dbReference type="ChEBI" id="CHEBI:29985"/>
        <dbReference type="ChEBI" id="CHEBI:57766"/>
        <dbReference type="ChEBI" id="CHEBI:57980"/>
        <dbReference type="EC" id="2.6.1.9"/>
    </reaction>
</comment>
<comment type="cofactor">
    <cofactor evidence="1">
        <name>pyridoxal 5'-phosphate</name>
        <dbReference type="ChEBI" id="CHEBI:597326"/>
    </cofactor>
</comment>
<comment type="pathway">
    <text>Amino-acid biosynthesis; L-histidine biosynthesis; L-histidine from 5-phospho-alpha-D-ribose 1-diphosphate: step 7/9.</text>
</comment>
<comment type="subunit">
    <text evidence="1">Homodimer.</text>
</comment>
<comment type="similarity">
    <text evidence="2">Belongs to the class-II pyridoxal-phosphate-dependent aminotransferase family. Histidinol-phosphate aminotransferase subfamily.</text>
</comment>